<keyword id="KW-0028">Amino-acid biosynthesis</keyword>
<keyword id="KW-0057">Aromatic amino acid biosynthesis</keyword>
<keyword id="KW-0274">FAD</keyword>
<keyword id="KW-0285">Flavoprotein</keyword>
<keyword id="KW-0288">FMN</keyword>
<keyword id="KW-0456">Lyase</keyword>
<keyword id="KW-0521">NADP</keyword>
<evidence type="ECO:0000255" key="1">
    <source>
        <dbReference type="HAMAP-Rule" id="MF_00300"/>
    </source>
</evidence>
<accession>A3N8Q9</accession>
<name>AROC_BURP6</name>
<dbReference type="EC" id="4.2.3.5" evidence="1"/>
<dbReference type="EMBL" id="CP000570">
    <property type="protein sequence ID" value="ABN84148.1"/>
    <property type="molecule type" value="Genomic_DNA"/>
</dbReference>
<dbReference type="RefSeq" id="WP_004534774.1">
    <property type="nucleotide sequence ID" value="NC_009074.1"/>
</dbReference>
<dbReference type="SMR" id="A3N8Q9"/>
<dbReference type="GeneID" id="93060029"/>
<dbReference type="KEGG" id="bpd:BURPS668_1689"/>
<dbReference type="HOGENOM" id="CLU_034547_0_2_4"/>
<dbReference type="UniPathway" id="UPA00053">
    <property type="reaction ID" value="UER00090"/>
</dbReference>
<dbReference type="GO" id="GO:0005829">
    <property type="term" value="C:cytosol"/>
    <property type="evidence" value="ECO:0007669"/>
    <property type="project" value="TreeGrafter"/>
</dbReference>
<dbReference type="GO" id="GO:0004107">
    <property type="term" value="F:chorismate synthase activity"/>
    <property type="evidence" value="ECO:0007669"/>
    <property type="project" value="UniProtKB-UniRule"/>
</dbReference>
<dbReference type="GO" id="GO:0010181">
    <property type="term" value="F:FMN binding"/>
    <property type="evidence" value="ECO:0007669"/>
    <property type="project" value="TreeGrafter"/>
</dbReference>
<dbReference type="GO" id="GO:0008652">
    <property type="term" value="P:amino acid biosynthetic process"/>
    <property type="evidence" value="ECO:0007669"/>
    <property type="project" value="UniProtKB-KW"/>
</dbReference>
<dbReference type="GO" id="GO:0009073">
    <property type="term" value="P:aromatic amino acid family biosynthetic process"/>
    <property type="evidence" value="ECO:0007669"/>
    <property type="project" value="UniProtKB-KW"/>
</dbReference>
<dbReference type="GO" id="GO:0009423">
    <property type="term" value="P:chorismate biosynthetic process"/>
    <property type="evidence" value="ECO:0007669"/>
    <property type="project" value="UniProtKB-UniRule"/>
</dbReference>
<dbReference type="CDD" id="cd07304">
    <property type="entry name" value="Chorismate_synthase"/>
    <property type="match status" value="1"/>
</dbReference>
<dbReference type="FunFam" id="3.60.150.10:FF:000001">
    <property type="entry name" value="Chorismate synthase"/>
    <property type="match status" value="1"/>
</dbReference>
<dbReference type="Gene3D" id="3.60.150.10">
    <property type="entry name" value="Chorismate synthase AroC"/>
    <property type="match status" value="1"/>
</dbReference>
<dbReference type="HAMAP" id="MF_00300">
    <property type="entry name" value="Chorismate_synth"/>
    <property type="match status" value="1"/>
</dbReference>
<dbReference type="InterPro" id="IPR000453">
    <property type="entry name" value="Chorismate_synth"/>
</dbReference>
<dbReference type="InterPro" id="IPR035904">
    <property type="entry name" value="Chorismate_synth_AroC_sf"/>
</dbReference>
<dbReference type="InterPro" id="IPR020541">
    <property type="entry name" value="Chorismate_synthase_CS"/>
</dbReference>
<dbReference type="NCBIfam" id="TIGR00033">
    <property type="entry name" value="aroC"/>
    <property type="match status" value="1"/>
</dbReference>
<dbReference type="NCBIfam" id="NF003793">
    <property type="entry name" value="PRK05382.1"/>
    <property type="match status" value="1"/>
</dbReference>
<dbReference type="PANTHER" id="PTHR21085">
    <property type="entry name" value="CHORISMATE SYNTHASE"/>
    <property type="match status" value="1"/>
</dbReference>
<dbReference type="PANTHER" id="PTHR21085:SF0">
    <property type="entry name" value="CHORISMATE SYNTHASE"/>
    <property type="match status" value="1"/>
</dbReference>
<dbReference type="Pfam" id="PF01264">
    <property type="entry name" value="Chorismate_synt"/>
    <property type="match status" value="1"/>
</dbReference>
<dbReference type="PIRSF" id="PIRSF001456">
    <property type="entry name" value="Chorismate_synth"/>
    <property type="match status" value="1"/>
</dbReference>
<dbReference type="SUPFAM" id="SSF103263">
    <property type="entry name" value="Chorismate synthase, AroC"/>
    <property type="match status" value="1"/>
</dbReference>
<dbReference type="PROSITE" id="PS00787">
    <property type="entry name" value="CHORISMATE_SYNTHASE_1"/>
    <property type="match status" value="1"/>
</dbReference>
<dbReference type="PROSITE" id="PS00788">
    <property type="entry name" value="CHORISMATE_SYNTHASE_2"/>
    <property type="match status" value="1"/>
</dbReference>
<dbReference type="PROSITE" id="PS00789">
    <property type="entry name" value="CHORISMATE_SYNTHASE_3"/>
    <property type="match status" value="1"/>
</dbReference>
<feature type="chain" id="PRO_1000022469" description="Chorismate synthase">
    <location>
        <begin position="1"/>
        <end position="369"/>
    </location>
</feature>
<feature type="binding site" evidence="1">
    <location>
        <position position="48"/>
    </location>
    <ligand>
        <name>NADP(+)</name>
        <dbReference type="ChEBI" id="CHEBI:58349"/>
    </ligand>
</feature>
<feature type="binding site" evidence="1">
    <location>
        <position position="54"/>
    </location>
    <ligand>
        <name>NADP(+)</name>
        <dbReference type="ChEBI" id="CHEBI:58349"/>
    </ligand>
</feature>
<feature type="binding site" evidence="1">
    <location>
        <begin position="125"/>
        <end position="127"/>
    </location>
    <ligand>
        <name>FMN</name>
        <dbReference type="ChEBI" id="CHEBI:58210"/>
    </ligand>
</feature>
<feature type="binding site" evidence="1">
    <location>
        <begin position="238"/>
        <end position="239"/>
    </location>
    <ligand>
        <name>FMN</name>
        <dbReference type="ChEBI" id="CHEBI:58210"/>
    </ligand>
</feature>
<feature type="binding site" evidence="1">
    <location>
        <position position="278"/>
    </location>
    <ligand>
        <name>FMN</name>
        <dbReference type="ChEBI" id="CHEBI:58210"/>
    </ligand>
</feature>
<feature type="binding site" evidence="1">
    <location>
        <begin position="293"/>
        <end position="297"/>
    </location>
    <ligand>
        <name>FMN</name>
        <dbReference type="ChEBI" id="CHEBI:58210"/>
    </ligand>
</feature>
<feature type="binding site" evidence="1">
    <location>
        <position position="319"/>
    </location>
    <ligand>
        <name>FMN</name>
        <dbReference type="ChEBI" id="CHEBI:58210"/>
    </ligand>
</feature>
<comment type="function">
    <text evidence="1">Catalyzes the anti-1,4-elimination of the C-3 phosphate and the C-6 proR hydrogen from 5-enolpyruvylshikimate-3-phosphate (EPSP) to yield chorismate, which is the branch point compound that serves as the starting substrate for the three terminal pathways of aromatic amino acid biosynthesis. This reaction introduces a second double bond into the aromatic ring system.</text>
</comment>
<comment type="catalytic activity">
    <reaction evidence="1">
        <text>5-O-(1-carboxyvinyl)-3-phosphoshikimate = chorismate + phosphate</text>
        <dbReference type="Rhea" id="RHEA:21020"/>
        <dbReference type="ChEBI" id="CHEBI:29748"/>
        <dbReference type="ChEBI" id="CHEBI:43474"/>
        <dbReference type="ChEBI" id="CHEBI:57701"/>
        <dbReference type="EC" id="4.2.3.5"/>
    </reaction>
</comment>
<comment type="cofactor">
    <cofactor evidence="1">
        <name>FMNH2</name>
        <dbReference type="ChEBI" id="CHEBI:57618"/>
    </cofactor>
    <text evidence="1">Reduced FMN (FMNH(2)).</text>
</comment>
<comment type="pathway">
    <text evidence="1">Metabolic intermediate biosynthesis; chorismate biosynthesis; chorismate from D-erythrose 4-phosphate and phosphoenolpyruvate: step 7/7.</text>
</comment>
<comment type="subunit">
    <text evidence="1">Homotetramer.</text>
</comment>
<comment type="similarity">
    <text evidence="1">Belongs to the chorismate synthase family.</text>
</comment>
<reference key="1">
    <citation type="journal article" date="2010" name="Genome Biol. Evol.">
        <title>Continuing evolution of Burkholderia mallei through genome reduction and large-scale rearrangements.</title>
        <authorList>
            <person name="Losada L."/>
            <person name="Ronning C.M."/>
            <person name="DeShazer D."/>
            <person name="Woods D."/>
            <person name="Fedorova N."/>
            <person name="Kim H.S."/>
            <person name="Shabalina S.A."/>
            <person name="Pearson T.R."/>
            <person name="Brinkac L."/>
            <person name="Tan P."/>
            <person name="Nandi T."/>
            <person name="Crabtree J."/>
            <person name="Badger J."/>
            <person name="Beckstrom-Sternberg S."/>
            <person name="Saqib M."/>
            <person name="Schutzer S.E."/>
            <person name="Keim P."/>
            <person name="Nierman W.C."/>
        </authorList>
    </citation>
    <scope>NUCLEOTIDE SEQUENCE [LARGE SCALE GENOMIC DNA]</scope>
    <source>
        <strain>668</strain>
    </source>
</reference>
<gene>
    <name evidence="1" type="primary">aroC</name>
    <name type="ordered locus">BURPS668_1689</name>
</gene>
<protein>
    <recommendedName>
        <fullName evidence="1">Chorismate synthase</fullName>
        <shortName evidence="1">CS</shortName>
        <ecNumber evidence="1">4.2.3.5</ecNumber>
    </recommendedName>
    <alternativeName>
        <fullName evidence="1">5-enolpyruvylshikimate-3-phosphate phospholyase</fullName>
    </alternativeName>
</protein>
<proteinExistence type="inferred from homology"/>
<organism>
    <name type="scientific">Burkholderia pseudomallei (strain 668)</name>
    <dbReference type="NCBI Taxonomy" id="320373"/>
    <lineage>
        <taxon>Bacteria</taxon>
        <taxon>Pseudomonadati</taxon>
        <taxon>Pseudomonadota</taxon>
        <taxon>Betaproteobacteria</taxon>
        <taxon>Burkholderiales</taxon>
        <taxon>Burkholderiaceae</taxon>
        <taxon>Burkholderia</taxon>
        <taxon>pseudomallei group</taxon>
    </lineage>
</organism>
<sequence>MSGNTLGTLFTVTTFGESHGPAIGCVIDGCPPGMALTEADVQLELDRRKPGTSRHVTQRQEPDQVEILSGVFEGVTTGAPIALLIRNTDQRSKDYGNIAETFRPGHADYTYWQKYGVRDYRGGGRSSARLTAPVVGAGAIAKKWLRERFGVEVRGYMSALGEIEIPFVDWSHVRENPFFAPNADIVPQLEGYMDALRKDGDSIGARIDVVASGVPVGWGEPLFDRLDADIAHAMMGINAVKGVEIGAGFASVAQRGSVHGDELTPDGFVGNHAGGVLGGISTGQDITVSIAIKPTSSIRTPRRSITRAGEPAVVETFGRHDPCVGIRATPIAESMLALVLIDHALRHRAQCGDVSSATPRIAARAPDAQ</sequence>